<sequence length="179" mass="19857">MQKAVVMDEQAIRRALTRIAHEIIERNKGIDGCVLVGIKTRGIYLARRLAERIEQIEGTSVPVGELDITLYRDDLTMKTEDHEPLVKGTNVPFPVSEQKVILVDDVLFTGRTVRAAMDAVMDLGRPARIQLAVLVDRGHRELPIRADFVGKNVPTSSAEVIVVELAEVDGVDQVSIHEK</sequence>
<organism>
    <name type="scientific">Geobacillus thermodenitrificans (strain NG80-2)</name>
    <dbReference type="NCBI Taxonomy" id="420246"/>
    <lineage>
        <taxon>Bacteria</taxon>
        <taxon>Bacillati</taxon>
        <taxon>Bacillota</taxon>
        <taxon>Bacilli</taxon>
        <taxon>Bacillales</taxon>
        <taxon>Anoxybacillaceae</taxon>
        <taxon>Geobacillus</taxon>
    </lineage>
</organism>
<feature type="chain" id="PRO_1000053836" description="Bifunctional protein PyrR">
    <location>
        <begin position="1"/>
        <end position="179"/>
    </location>
</feature>
<feature type="short sequence motif" description="PRPP-binding" evidence="1">
    <location>
        <begin position="100"/>
        <end position="112"/>
    </location>
</feature>
<accession>A4IM28</accession>
<protein>
    <recommendedName>
        <fullName evidence="1">Bifunctional protein PyrR</fullName>
    </recommendedName>
    <domain>
        <recommendedName>
            <fullName evidence="1">Pyrimidine operon regulatory protein</fullName>
        </recommendedName>
    </domain>
    <domain>
        <recommendedName>
            <fullName evidence="1">Uracil phosphoribosyltransferase</fullName>
            <shortName evidence="1">UPRTase</shortName>
            <ecNumber evidence="1">2.4.2.9</ecNumber>
        </recommendedName>
    </domain>
</protein>
<keyword id="KW-0328">Glycosyltransferase</keyword>
<keyword id="KW-0694">RNA-binding</keyword>
<keyword id="KW-0804">Transcription</keyword>
<keyword id="KW-0805">Transcription regulation</keyword>
<keyword id="KW-0806">Transcription termination</keyword>
<keyword id="KW-0808">Transferase</keyword>
<evidence type="ECO:0000255" key="1">
    <source>
        <dbReference type="HAMAP-Rule" id="MF_01219"/>
    </source>
</evidence>
<reference key="1">
    <citation type="journal article" date="2007" name="Proc. Natl. Acad. Sci. U.S.A.">
        <title>Genome and proteome of long-chain alkane degrading Geobacillus thermodenitrificans NG80-2 isolated from a deep-subsurface oil reservoir.</title>
        <authorList>
            <person name="Feng L."/>
            <person name="Wang W."/>
            <person name="Cheng J."/>
            <person name="Ren Y."/>
            <person name="Zhao G."/>
            <person name="Gao C."/>
            <person name="Tang Y."/>
            <person name="Liu X."/>
            <person name="Han W."/>
            <person name="Peng X."/>
            <person name="Liu R."/>
            <person name="Wang L."/>
        </authorList>
    </citation>
    <scope>NUCLEOTIDE SEQUENCE [LARGE SCALE GENOMIC DNA]</scope>
    <source>
        <strain>NG80-2</strain>
    </source>
</reference>
<gene>
    <name evidence="1" type="primary">pyrR</name>
    <name type="ordered locus">GTNG_1004</name>
</gene>
<proteinExistence type="inferred from homology"/>
<name>PYRR_GEOTN</name>
<dbReference type="EC" id="2.4.2.9" evidence="1"/>
<dbReference type="EMBL" id="CP000557">
    <property type="protein sequence ID" value="ABO66382.1"/>
    <property type="molecule type" value="Genomic_DNA"/>
</dbReference>
<dbReference type="RefSeq" id="WP_008878661.1">
    <property type="nucleotide sequence ID" value="NC_009328.1"/>
</dbReference>
<dbReference type="SMR" id="A4IM28"/>
<dbReference type="GeneID" id="87621403"/>
<dbReference type="KEGG" id="gtn:GTNG_1004"/>
<dbReference type="eggNOG" id="COG2065">
    <property type="taxonomic scope" value="Bacteria"/>
</dbReference>
<dbReference type="HOGENOM" id="CLU_094234_2_1_9"/>
<dbReference type="Proteomes" id="UP000001578">
    <property type="component" value="Chromosome"/>
</dbReference>
<dbReference type="GO" id="GO:0003723">
    <property type="term" value="F:RNA binding"/>
    <property type="evidence" value="ECO:0007669"/>
    <property type="project" value="UniProtKB-UniRule"/>
</dbReference>
<dbReference type="GO" id="GO:0004845">
    <property type="term" value="F:uracil phosphoribosyltransferase activity"/>
    <property type="evidence" value="ECO:0007669"/>
    <property type="project" value="UniProtKB-UniRule"/>
</dbReference>
<dbReference type="GO" id="GO:0006353">
    <property type="term" value="P:DNA-templated transcription termination"/>
    <property type="evidence" value="ECO:0007669"/>
    <property type="project" value="UniProtKB-UniRule"/>
</dbReference>
<dbReference type="CDD" id="cd06223">
    <property type="entry name" value="PRTases_typeI"/>
    <property type="match status" value="1"/>
</dbReference>
<dbReference type="FunFam" id="3.40.50.2020:FF:000020">
    <property type="entry name" value="Bifunctional protein PyrR"/>
    <property type="match status" value="1"/>
</dbReference>
<dbReference type="Gene3D" id="3.40.50.2020">
    <property type="match status" value="1"/>
</dbReference>
<dbReference type="HAMAP" id="MF_01219">
    <property type="entry name" value="PyrR"/>
    <property type="match status" value="1"/>
</dbReference>
<dbReference type="InterPro" id="IPR000836">
    <property type="entry name" value="PRibTrfase_dom"/>
</dbReference>
<dbReference type="InterPro" id="IPR029057">
    <property type="entry name" value="PRTase-like"/>
</dbReference>
<dbReference type="InterPro" id="IPR023050">
    <property type="entry name" value="PyrR"/>
</dbReference>
<dbReference type="InterPro" id="IPR050137">
    <property type="entry name" value="PyrR_bifunctional"/>
</dbReference>
<dbReference type="NCBIfam" id="NF003545">
    <property type="entry name" value="PRK05205.1-1"/>
    <property type="match status" value="1"/>
</dbReference>
<dbReference type="NCBIfam" id="NF003547">
    <property type="entry name" value="PRK05205.1-3"/>
    <property type="match status" value="1"/>
</dbReference>
<dbReference type="NCBIfam" id="NF003548">
    <property type="entry name" value="PRK05205.1-4"/>
    <property type="match status" value="1"/>
</dbReference>
<dbReference type="NCBIfam" id="NF003549">
    <property type="entry name" value="PRK05205.1-5"/>
    <property type="match status" value="1"/>
</dbReference>
<dbReference type="PANTHER" id="PTHR11608">
    <property type="entry name" value="BIFUNCTIONAL PROTEIN PYRR"/>
    <property type="match status" value="1"/>
</dbReference>
<dbReference type="PANTHER" id="PTHR11608:SF0">
    <property type="entry name" value="BIFUNCTIONAL PROTEIN PYRR"/>
    <property type="match status" value="1"/>
</dbReference>
<dbReference type="Pfam" id="PF00156">
    <property type="entry name" value="Pribosyltran"/>
    <property type="match status" value="1"/>
</dbReference>
<dbReference type="SUPFAM" id="SSF53271">
    <property type="entry name" value="PRTase-like"/>
    <property type="match status" value="1"/>
</dbReference>
<comment type="function">
    <text evidence="1">Regulates transcriptional attenuation of the pyrimidine nucleotide (pyr) operon by binding in a uridine-dependent manner to specific sites on pyr mRNA. This disrupts an antiterminator hairpin in the RNA and favors formation of a downstream transcription terminator, leading to a reduced expression of downstream genes.</text>
</comment>
<comment type="function">
    <text evidence="1">Also displays a weak uracil phosphoribosyltransferase activity which is not physiologically significant.</text>
</comment>
<comment type="catalytic activity">
    <reaction evidence="1">
        <text>UMP + diphosphate = 5-phospho-alpha-D-ribose 1-diphosphate + uracil</text>
        <dbReference type="Rhea" id="RHEA:13017"/>
        <dbReference type="ChEBI" id="CHEBI:17568"/>
        <dbReference type="ChEBI" id="CHEBI:33019"/>
        <dbReference type="ChEBI" id="CHEBI:57865"/>
        <dbReference type="ChEBI" id="CHEBI:58017"/>
        <dbReference type="EC" id="2.4.2.9"/>
    </reaction>
</comment>
<comment type="subunit">
    <text evidence="1">Homodimer and homohexamer; in equilibrium.</text>
</comment>
<comment type="similarity">
    <text evidence="1">Belongs to the purine/pyrimidine phosphoribosyltransferase family. PyrR subfamily.</text>
</comment>